<sequence>MLRVFIFFVFLGSGLTGRIKPQVTCKYFISENNTWYKYNVTILNSSIILPAYNTIPSNAAGISCTCHDIDYLQKNNISIHYNTSILKTFQDIRIIRCGMKNISEIAGGFGKELKFLDLRYNDLQVIDYNILRKLIRSNTPTYLYYNNLMCGKRNCPLYYFLLKQEQTYLKRLPQFFLRRISFSNNNTYLYHFLSCGNKPGHEFLEYQTKYCRTKFPEINITVNQLIAKKNTERYKSCYPLVFISILCSCISFLFLFICLLRSICKKYSCTKQDKSSHNYIPLIPSYTFSLKKHRHPETAVVEDHTTSANSPIVYIPTTEEKKVSCSRRK</sequence>
<gene>
    <name evidence="4" type="primary">I329L</name>
</gene>
<evidence type="ECO:0000250" key="1">
    <source>
        <dbReference type="UniProtKB" id="P27945"/>
    </source>
</evidence>
<evidence type="ECO:0000255" key="2"/>
<evidence type="ECO:0000305" key="3"/>
<evidence type="ECO:0000312" key="4">
    <source>
        <dbReference type="EMBL" id="CAN10489.1"/>
    </source>
</evidence>
<comment type="function">
    <text evidence="1">Viral TLR3 homolog that probably prevents TLR3 dimerization and subsequent induction of IFN. Inhibits dsRNA-stimulated activation of NF-kB and IRF3.</text>
</comment>
<comment type="subcellular location">
    <subcellularLocation>
        <location evidence="1">Host endoplasmic reticulum membrane</location>
        <topology evidence="1">Single-pass type I membrane protein</topology>
    </subcellularLocation>
    <subcellularLocation>
        <location evidence="1">Host Golgi apparatus membrane</location>
        <topology evidence="1">Single-pass type I membrane protein</topology>
    </subcellularLocation>
</comment>
<comment type="domain">
    <text evidence="1">Contains putative leucine-rich repeats (LRR) and a C-terminus cysteine-rich capping motif similar to domain structure of host TLR3.</text>
</comment>
<comment type="PTM">
    <text evidence="1">Highly glycosylated.</text>
</comment>
<comment type="similarity">
    <text evidence="3">Belongs to the asfivirus I329L family.</text>
</comment>
<protein>
    <recommendedName>
        <fullName>Transmembrane protein I329L</fullName>
    </recommendedName>
</protein>
<keyword id="KW-1015">Disulfide bond</keyword>
<keyword id="KW-0325">Glycoprotein</keyword>
<keyword id="KW-1038">Host endoplasmic reticulum</keyword>
<keyword id="KW-1040">Host Golgi apparatus</keyword>
<keyword id="KW-1043">Host membrane</keyword>
<keyword id="KW-0945">Host-virus interaction</keyword>
<keyword id="KW-1090">Inhibition of host innate immune response by virus</keyword>
<keyword id="KW-1225">Inhibition of host TLR pathway by virus</keyword>
<keyword id="KW-0426">Late protein</keyword>
<keyword id="KW-0433">Leucine-rich repeat</keyword>
<keyword id="KW-0472">Membrane</keyword>
<keyword id="KW-0677">Repeat</keyword>
<keyword id="KW-0732">Signal</keyword>
<keyword id="KW-0812">Transmembrane</keyword>
<keyword id="KW-1133">Transmembrane helix</keyword>
<keyword id="KW-0899">Viral immunoevasion</keyword>
<name>I329L_ASFPP</name>
<organismHost>
    <name type="scientific">Ornithodoros</name>
    <name type="common">relapsing fever ticks</name>
    <dbReference type="NCBI Taxonomy" id="6937"/>
</organismHost>
<organismHost>
    <name type="scientific">Sus scrofa</name>
    <name type="common">Pig</name>
    <dbReference type="NCBI Taxonomy" id="9823"/>
</organismHost>
<feature type="signal peptide" evidence="2">
    <location>
        <begin position="1"/>
        <end position="31"/>
    </location>
</feature>
<feature type="chain" id="PRO_0000454844" description="Transmembrane protein I329L">
    <location>
        <begin position="32"/>
        <end position="329"/>
    </location>
</feature>
<feature type="topological domain" description="Extracellular" evidence="2">
    <location>
        <begin position="32"/>
        <end position="239"/>
    </location>
</feature>
<feature type="transmembrane region" description="Helical" evidence="2">
    <location>
        <begin position="240"/>
        <end position="260"/>
    </location>
</feature>
<feature type="topological domain" description="Cytoplasmic" evidence="2">
    <location>
        <begin position="261"/>
        <end position="329"/>
    </location>
</feature>
<feature type="repeat" description="LRR" evidence="1">
    <location>
        <begin position="112"/>
        <end position="133"/>
    </location>
</feature>
<feature type="glycosylation site" description="N-linked (GlcNAc...) asparagine; by host" evidence="2">
    <location>
        <position position="32"/>
    </location>
</feature>
<feature type="glycosylation site" description="N-linked (GlcNAc...) asparagine; by host" evidence="2">
    <location>
        <position position="39"/>
    </location>
</feature>
<feature type="glycosylation site" description="N-linked (GlcNAc...) asparagine; by host" evidence="2">
    <location>
        <position position="44"/>
    </location>
</feature>
<feature type="glycosylation site" description="N-linked (GlcNAc...) asparagine; by host" evidence="2">
    <location>
        <position position="76"/>
    </location>
</feature>
<feature type="glycosylation site" description="N-linked (GlcNAc...) asparagine; by host" evidence="2">
    <location>
        <position position="82"/>
    </location>
</feature>
<feature type="glycosylation site" description="N-linked (GlcNAc...) asparagine; by host" evidence="2">
    <location>
        <position position="101"/>
    </location>
</feature>
<feature type="glycosylation site" description="N-linked (GlcNAc...) asparagine; by host" evidence="2">
    <location>
        <position position="185"/>
    </location>
</feature>
<feature type="glycosylation site" description="N-linked (GlcNAc...) asparagine; by host" evidence="2">
    <location>
        <position position="219"/>
    </location>
</feature>
<feature type="disulfide bond" evidence="1">
    <location>
        <begin position="195"/>
        <end position="237"/>
    </location>
</feature>
<accession>A9JM73</accession>
<reference key="1">
    <citation type="journal article" date="2008" name="J. Gen. Virol.">
        <title>Comparison of the genome sequences of non-pathogenic and pathogenic African swine fever virus isolates.</title>
        <authorList>
            <person name="Chapman D.A.G."/>
            <person name="Tcherepanov V."/>
            <person name="Upton C."/>
            <person name="Dixon L.K."/>
        </authorList>
    </citation>
    <scope>NUCLEOTIDE SEQUENCE [LARGE SCALE GENOMIC DNA]</scope>
    <source>
        <strain evidence="4">OURT 88/3</strain>
    </source>
</reference>
<reference key="2">
    <citation type="journal article" date="2018" name="Sci. Rep.">
        <title>The intracellular proteome of African swine fever virus.</title>
        <authorList>
            <person name="Kessler C."/>
            <person name="Forth J.H."/>
            <person name="Keil G.M."/>
            <person name="Mettenleiter T.C."/>
            <person name="Blome S."/>
            <person name="Karger A."/>
        </authorList>
    </citation>
    <scope>SIGNAL SEQUENCE CLEAVAGE SITE</scope>
</reference>
<organism>
    <name type="scientific">African swine fever virus (isolate Pig/Portugal/OURT88/1988)</name>
    <name type="common">ASFV</name>
    <dbReference type="NCBI Taxonomy" id="443878"/>
    <lineage>
        <taxon>Viruses</taxon>
        <taxon>Varidnaviria</taxon>
        <taxon>Bamfordvirae</taxon>
        <taxon>Nucleocytoviricota</taxon>
        <taxon>Pokkesviricetes</taxon>
        <taxon>Asfuvirales</taxon>
        <taxon>Asfarviridae</taxon>
        <taxon>Asfivirus</taxon>
        <taxon>African swine fever virus</taxon>
    </lineage>
</organism>
<proteinExistence type="evidence at protein level"/>
<dbReference type="EMBL" id="AM712240">
    <property type="protein sequence ID" value="CAN10489.1"/>
    <property type="molecule type" value="Genomic_DNA"/>
</dbReference>
<dbReference type="RefSeq" id="YP_009703747.1">
    <property type="nucleotide sequence ID" value="NC_044957.1"/>
</dbReference>
<dbReference type="GlyCosmos" id="A9JM73">
    <property type="glycosylation" value="8 sites, No reported glycans"/>
</dbReference>
<dbReference type="GeneID" id="41902556"/>
<dbReference type="Proteomes" id="UP000108903">
    <property type="component" value="Segment"/>
</dbReference>
<dbReference type="GO" id="GO:0044167">
    <property type="term" value="C:host cell endoplasmic reticulum membrane"/>
    <property type="evidence" value="ECO:0007669"/>
    <property type="project" value="UniProtKB-SubCell"/>
</dbReference>
<dbReference type="GO" id="GO:0044178">
    <property type="term" value="C:host cell Golgi membrane"/>
    <property type="evidence" value="ECO:0007669"/>
    <property type="project" value="UniProtKB-SubCell"/>
</dbReference>
<dbReference type="GO" id="GO:0016020">
    <property type="term" value="C:membrane"/>
    <property type="evidence" value="ECO:0007669"/>
    <property type="project" value="UniProtKB-KW"/>
</dbReference>
<dbReference type="GO" id="GO:0052170">
    <property type="term" value="P:symbiont-mediated suppression of host innate immune response"/>
    <property type="evidence" value="ECO:0007669"/>
    <property type="project" value="UniProtKB-KW"/>
</dbReference>
<dbReference type="GO" id="GO:0039722">
    <property type="term" value="P:symbiont-mediated suppression of host toll-like receptor signaling pathway"/>
    <property type="evidence" value="ECO:0007669"/>
    <property type="project" value="UniProtKB-KW"/>
</dbReference>
<dbReference type="Gene3D" id="3.80.10.10">
    <property type="entry name" value="Ribonuclease Inhibitor"/>
    <property type="match status" value="1"/>
</dbReference>
<dbReference type="InterPro" id="IPR032675">
    <property type="entry name" value="LRR_dom_sf"/>
</dbReference>